<comment type="function">
    <text evidence="4">Glucuronoyl esterase which may play a significant role in biomass degradation, as it is considered to disconnect hemicellulose from lignin through the hydrolysis of the ester bond between 4-O-methyl-D-glucuronic acid residues of glucuronoxylans and aromatic alcohols of lignin.</text>
</comment>
<comment type="catalytic activity">
    <reaction evidence="4">
        <text>a 4-O-methyl-alpha-D-glucuronosyl ester derivative + H2O = 4-O-methyl-alpha-D-glucuronate derivative + an alcohol + H(+)</text>
        <dbReference type="Rhea" id="RHEA:67452"/>
        <dbReference type="ChEBI" id="CHEBI:15377"/>
        <dbReference type="ChEBI" id="CHEBI:15378"/>
        <dbReference type="ChEBI" id="CHEBI:30879"/>
        <dbReference type="ChEBI" id="CHEBI:171667"/>
        <dbReference type="ChEBI" id="CHEBI:171668"/>
        <dbReference type="EC" id="3.1.1.117"/>
    </reaction>
    <physiologicalReaction direction="left-to-right" evidence="7">
        <dbReference type="Rhea" id="RHEA:67453"/>
    </physiologicalReaction>
</comment>
<comment type="biophysicochemical properties">
    <kinetics>
        <KM evidence="4">15 mM for 3-(4-methoxyphenyl) propyl methyl 4-O-methyl-alpha-D-glucopyranosiduronate</KM>
        <text evidence="4">kcat is 16.8 sec(-1) with 3-(4-methoxyphenyl) propyl methyl 4-O-methyl-alpha-D-glucopyranosiduronate.</text>
    </kinetics>
    <phDependence>
        <text evidence="4">Optimum pH is 7. Stable from pH 4 to pH 7.</text>
    </phDependence>
    <temperatureDependence>
        <text evidence="4">Optimum temperature is 40-50 degrees Celsius.</text>
    </temperatureDependence>
</comment>
<comment type="subcellular location">
    <subcellularLocation>
        <location evidence="1">Secreted</location>
    </subcellularLocation>
</comment>
<comment type="similarity">
    <text evidence="6">Belongs to the carbohydrate esterase 15 (CE15) family.</text>
</comment>
<reference key="1">
    <citation type="journal article" date="2003" name="Nature">
        <title>The genome sequence of the filamentous fungus Neurospora crassa.</title>
        <authorList>
            <person name="Galagan J.E."/>
            <person name="Calvo S.E."/>
            <person name="Borkovich K.A."/>
            <person name="Selker E.U."/>
            <person name="Read N.D."/>
            <person name="Jaffe D.B."/>
            <person name="FitzHugh W."/>
            <person name="Ma L.-J."/>
            <person name="Smirnov S."/>
            <person name="Purcell S."/>
            <person name="Rehman B."/>
            <person name="Elkins T."/>
            <person name="Engels R."/>
            <person name="Wang S."/>
            <person name="Nielsen C.B."/>
            <person name="Butler J."/>
            <person name="Endrizzi M."/>
            <person name="Qui D."/>
            <person name="Ianakiev P."/>
            <person name="Bell-Pedersen D."/>
            <person name="Nelson M.A."/>
            <person name="Werner-Washburne M."/>
            <person name="Selitrennikoff C.P."/>
            <person name="Kinsey J.A."/>
            <person name="Braun E.L."/>
            <person name="Zelter A."/>
            <person name="Schulte U."/>
            <person name="Kothe G.O."/>
            <person name="Jedd G."/>
            <person name="Mewes H.-W."/>
            <person name="Staben C."/>
            <person name="Marcotte E."/>
            <person name="Greenberg D."/>
            <person name="Roy A."/>
            <person name="Foley K."/>
            <person name="Naylor J."/>
            <person name="Stange-Thomann N."/>
            <person name="Barrett R."/>
            <person name="Gnerre S."/>
            <person name="Kamal M."/>
            <person name="Kamvysselis M."/>
            <person name="Mauceli E.W."/>
            <person name="Bielke C."/>
            <person name="Rudd S."/>
            <person name="Frishman D."/>
            <person name="Krystofova S."/>
            <person name="Rasmussen C."/>
            <person name="Metzenberg R.L."/>
            <person name="Perkins D.D."/>
            <person name="Kroken S."/>
            <person name="Cogoni C."/>
            <person name="Macino G."/>
            <person name="Catcheside D.E.A."/>
            <person name="Li W."/>
            <person name="Pratt R.J."/>
            <person name="Osmani S.A."/>
            <person name="DeSouza C.P.C."/>
            <person name="Glass N.L."/>
            <person name="Orbach M.J."/>
            <person name="Berglund J.A."/>
            <person name="Voelker R."/>
            <person name="Yarden O."/>
            <person name="Plamann M."/>
            <person name="Seiler S."/>
            <person name="Dunlap J.C."/>
            <person name="Radford A."/>
            <person name="Aramayo R."/>
            <person name="Natvig D.O."/>
            <person name="Alex L.A."/>
            <person name="Mannhaupt G."/>
            <person name="Ebbole D.J."/>
            <person name="Freitag M."/>
            <person name="Paulsen I."/>
            <person name="Sachs M.S."/>
            <person name="Lander E.S."/>
            <person name="Nusbaum C."/>
            <person name="Birren B.W."/>
        </authorList>
    </citation>
    <scope>NUCLEOTIDE SEQUENCE [LARGE SCALE GENOMIC DNA]</scope>
    <source>
        <strain>ATCC 24698 / 74-OR23-1A / CBS 708.71 / DSM 1257 / FGSC 987</strain>
    </source>
</reference>
<reference key="2">
    <citation type="journal article" date="2016" name="J. Gen. Appl. Microbiol.">
        <title>Functional expression and characterization of a glucuronoyl esterase from the fungus Neurospora crassa: identification of novel consensus sequences containing the catalytic triad.</title>
        <authorList>
            <person name="Huynh H.H."/>
            <person name="Arioka M."/>
        </authorList>
    </citation>
    <scope>FUNCTION</scope>
    <scope>CATALYTIC ACTIVITY</scope>
    <scope>BIOPHYSICOCHEMICAL PROPERTIES</scope>
</reference>
<organism>
    <name type="scientific">Neurospora crassa (strain ATCC 24698 / 74-OR23-1A / CBS 708.71 / DSM 1257 / FGSC 987)</name>
    <dbReference type="NCBI Taxonomy" id="367110"/>
    <lineage>
        <taxon>Eukaryota</taxon>
        <taxon>Fungi</taxon>
        <taxon>Dikarya</taxon>
        <taxon>Ascomycota</taxon>
        <taxon>Pezizomycotina</taxon>
        <taxon>Sordariomycetes</taxon>
        <taxon>Sordariomycetidae</taxon>
        <taxon>Sordariales</taxon>
        <taxon>Sordariaceae</taxon>
        <taxon>Neurospora</taxon>
    </lineage>
</organism>
<keyword id="KW-1015">Disulfide bond</keyword>
<keyword id="KW-0378">Hydrolase</keyword>
<keyword id="KW-0439">Lignin degradation</keyword>
<keyword id="KW-1185">Reference proteome</keyword>
<keyword id="KW-0964">Secreted</keyword>
<keyword id="KW-0719">Serine esterase</keyword>
<keyword id="KW-0732">Signal</keyword>
<protein>
    <recommendedName>
        <fullName evidence="6">4-O-methyl-glucuronoyl methylesterase</fullName>
        <ecNumber evidence="4">3.1.1.117</ecNumber>
    </recommendedName>
    <alternativeName>
        <fullName evidence="5">Glucuronoyl esterase</fullName>
        <shortName evidence="5">GE</shortName>
    </alternativeName>
</protein>
<gene>
    <name evidence="5" type="primary">Cip2</name>
    <name type="synonym">ce15-1</name>
    <name type="ORF">NCU09445</name>
</gene>
<proteinExistence type="evidence at protein level"/>
<feature type="signal peptide" evidence="3">
    <location>
        <begin position="1"/>
        <end position="18"/>
    </location>
</feature>
<feature type="chain" id="PRO_5004291006" description="4-O-methyl-glucuronoyl methylesterase" evidence="3">
    <location>
        <begin position="19"/>
        <end position="394"/>
    </location>
</feature>
<feature type="short sequence motif" description="GXSYXG catalytic site motif" evidence="2">
    <location>
        <begin position="209"/>
        <end position="214"/>
    </location>
</feature>
<feature type="active site" description="Nucleophile" evidence="2">
    <location>
        <position position="211"/>
    </location>
</feature>
<feature type="active site" description="Proton donor/acceptor" evidence="2">
    <location>
        <position position="344"/>
    </location>
</feature>
<feature type="binding site" evidence="2">
    <location>
        <position position="215"/>
    </location>
    <ligand>
        <name>substrate</name>
    </ligand>
</feature>
<feature type="binding site" evidence="2">
    <location>
        <position position="257"/>
    </location>
    <ligand>
        <name>substrate</name>
    </ligand>
</feature>
<feature type="binding site" evidence="2">
    <location>
        <position position="265"/>
    </location>
    <ligand>
        <name>substrate</name>
    </ligand>
</feature>
<feature type="binding site" evidence="2">
    <location>
        <position position="308"/>
    </location>
    <ligand>
        <name>substrate</name>
    </ligand>
</feature>
<feature type="disulfide bond" evidence="2">
    <location>
        <begin position="29"/>
        <end position="63"/>
    </location>
</feature>
<feature type="disulfide bond" evidence="2">
    <location>
        <begin position="210"/>
        <end position="345"/>
    </location>
</feature>
<feature type="disulfide bond" evidence="2">
    <location>
        <begin position="242"/>
        <end position="317"/>
    </location>
</feature>
<sequence length="394" mass="41351">MVHLTPALLLASAAFAAAAPASQIFERQCSVAGNYPTAAVSKLPDPFTTAAGQKITTKADFDCRKAEISKILQQYELGTYPGKPDKVEGSLSGNTLTVRITVGSQTVSFSASIKKPSSGSGPFPAIIGIGGISIPIPSTVATITFPNDDFAQQSGTSSRGRGKFYTLFGSSHSAGALIAWAWGVDRLVDALEQVQSTSGIDPKRLGVTGCSRNGKGAFVAGALVDRIALTIPQESGAGGAACWRISDSEKSAGKNIQTASQIVTENVWFSPAFNAYTRQTTNIPADHHMLAALTVPRGLIAFENDIDWLGPVSTTACMQAGRLIYKAYGVSNHMGFSLVGGHGHCQFPSSQQSELTSYINYFLLKAGTAPGAVERSSAKVDLKSWAPWDVPALS</sequence>
<evidence type="ECO:0000250" key="1">
    <source>
        <dbReference type="UniProtKB" id="G0RV93"/>
    </source>
</evidence>
<evidence type="ECO:0000250" key="2">
    <source>
        <dbReference type="UniProtKB" id="G2QJR6"/>
    </source>
</evidence>
<evidence type="ECO:0000255" key="3"/>
<evidence type="ECO:0000269" key="4">
    <source>
    </source>
</evidence>
<evidence type="ECO:0000303" key="5">
    <source>
    </source>
</evidence>
<evidence type="ECO:0000305" key="6"/>
<evidence type="ECO:0000305" key="7">
    <source>
    </source>
</evidence>
<dbReference type="EC" id="3.1.1.117" evidence="4"/>
<dbReference type="EMBL" id="CM002242">
    <property type="protein sequence ID" value="EAA29361.2"/>
    <property type="molecule type" value="Genomic_DNA"/>
</dbReference>
<dbReference type="RefSeq" id="XP_958597.2">
    <property type="nucleotide sequence ID" value="XM_953504.2"/>
</dbReference>
<dbReference type="SMR" id="Q7S1X0"/>
<dbReference type="STRING" id="367110.Q7S1X0"/>
<dbReference type="ESTHER" id="neucr-q7s1x0">
    <property type="family name" value="Glucuronoyl_esterase"/>
</dbReference>
<dbReference type="PaxDb" id="5141-EFNCRP00000009220"/>
<dbReference type="EnsemblFungi" id="EAA29361">
    <property type="protein sequence ID" value="EAA29361"/>
    <property type="gene ID" value="NCU09445"/>
</dbReference>
<dbReference type="GeneID" id="3874744"/>
<dbReference type="KEGG" id="ncr:NCU09445"/>
<dbReference type="VEuPathDB" id="FungiDB:NCU09445"/>
<dbReference type="HOGENOM" id="CLU_028869_1_1_1"/>
<dbReference type="InParanoid" id="Q7S1X0"/>
<dbReference type="OrthoDB" id="3781271at2759"/>
<dbReference type="BRENDA" id="3.1.1.117">
    <property type="organism ID" value="3627"/>
</dbReference>
<dbReference type="Proteomes" id="UP000001805">
    <property type="component" value="Chromosome 7, Linkage Group VII"/>
</dbReference>
<dbReference type="GO" id="GO:0005576">
    <property type="term" value="C:extracellular region"/>
    <property type="evidence" value="ECO:0007669"/>
    <property type="project" value="UniProtKB-SubCell"/>
</dbReference>
<dbReference type="GO" id="GO:0052689">
    <property type="term" value="F:carboxylic ester hydrolase activity"/>
    <property type="evidence" value="ECO:0007669"/>
    <property type="project" value="UniProtKB-KW"/>
</dbReference>
<dbReference type="GO" id="GO:0046274">
    <property type="term" value="P:lignin catabolic process"/>
    <property type="evidence" value="ECO:0007669"/>
    <property type="project" value="UniProtKB-KW"/>
</dbReference>
<dbReference type="Gene3D" id="3.40.50.1820">
    <property type="entry name" value="alpha/beta hydrolase"/>
    <property type="match status" value="1"/>
</dbReference>
<dbReference type="InterPro" id="IPR029058">
    <property type="entry name" value="AB_hydrolase_fold"/>
</dbReference>
<dbReference type="InterPro" id="IPR054579">
    <property type="entry name" value="GCE-like_dom"/>
</dbReference>
<dbReference type="Pfam" id="PF22244">
    <property type="entry name" value="GCE_fung"/>
    <property type="match status" value="1"/>
</dbReference>
<dbReference type="SUPFAM" id="SSF53474">
    <property type="entry name" value="alpha/beta-Hydrolases"/>
    <property type="match status" value="1"/>
</dbReference>
<accession>Q7S1X0</accession>
<name>GCE_NEUCR</name>